<reference evidence="11" key="1">
    <citation type="journal article" date="2000" name="Science">
        <title>The genome sequence of Drosophila melanogaster.</title>
        <authorList>
            <person name="Adams M.D."/>
            <person name="Celniker S.E."/>
            <person name="Holt R.A."/>
            <person name="Evans C.A."/>
            <person name="Gocayne J.D."/>
            <person name="Amanatides P.G."/>
            <person name="Scherer S.E."/>
            <person name="Li P.W."/>
            <person name="Hoskins R.A."/>
            <person name="Galle R.F."/>
            <person name="George R.A."/>
            <person name="Lewis S.E."/>
            <person name="Richards S."/>
            <person name="Ashburner M."/>
            <person name="Henderson S.N."/>
            <person name="Sutton G.G."/>
            <person name="Wortman J.R."/>
            <person name="Yandell M.D."/>
            <person name="Zhang Q."/>
            <person name="Chen L.X."/>
            <person name="Brandon R.C."/>
            <person name="Rogers Y.-H.C."/>
            <person name="Blazej R.G."/>
            <person name="Champe M."/>
            <person name="Pfeiffer B.D."/>
            <person name="Wan K.H."/>
            <person name="Doyle C."/>
            <person name="Baxter E.G."/>
            <person name="Helt G."/>
            <person name="Nelson C.R."/>
            <person name="Miklos G.L.G."/>
            <person name="Abril J.F."/>
            <person name="Agbayani A."/>
            <person name="An H.-J."/>
            <person name="Andrews-Pfannkoch C."/>
            <person name="Baldwin D."/>
            <person name="Ballew R.M."/>
            <person name="Basu A."/>
            <person name="Baxendale J."/>
            <person name="Bayraktaroglu L."/>
            <person name="Beasley E.M."/>
            <person name="Beeson K.Y."/>
            <person name="Benos P.V."/>
            <person name="Berman B.P."/>
            <person name="Bhandari D."/>
            <person name="Bolshakov S."/>
            <person name="Borkova D."/>
            <person name="Botchan M.R."/>
            <person name="Bouck J."/>
            <person name="Brokstein P."/>
            <person name="Brottier P."/>
            <person name="Burtis K.C."/>
            <person name="Busam D.A."/>
            <person name="Butler H."/>
            <person name="Cadieu E."/>
            <person name="Center A."/>
            <person name="Chandra I."/>
            <person name="Cherry J.M."/>
            <person name="Cawley S."/>
            <person name="Dahlke C."/>
            <person name="Davenport L.B."/>
            <person name="Davies P."/>
            <person name="de Pablos B."/>
            <person name="Delcher A."/>
            <person name="Deng Z."/>
            <person name="Mays A.D."/>
            <person name="Dew I."/>
            <person name="Dietz S.M."/>
            <person name="Dodson K."/>
            <person name="Doup L.E."/>
            <person name="Downes M."/>
            <person name="Dugan-Rocha S."/>
            <person name="Dunkov B.C."/>
            <person name="Dunn P."/>
            <person name="Durbin K.J."/>
            <person name="Evangelista C.C."/>
            <person name="Ferraz C."/>
            <person name="Ferriera S."/>
            <person name="Fleischmann W."/>
            <person name="Fosler C."/>
            <person name="Gabrielian A.E."/>
            <person name="Garg N.S."/>
            <person name="Gelbart W.M."/>
            <person name="Glasser K."/>
            <person name="Glodek A."/>
            <person name="Gong F."/>
            <person name="Gorrell J.H."/>
            <person name="Gu Z."/>
            <person name="Guan P."/>
            <person name="Harris M."/>
            <person name="Harris N.L."/>
            <person name="Harvey D.A."/>
            <person name="Heiman T.J."/>
            <person name="Hernandez J.R."/>
            <person name="Houck J."/>
            <person name="Hostin D."/>
            <person name="Houston K.A."/>
            <person name="Howland T.J."/>
            <person name="Wei M.-H."/>
            <person name="Ibegwam C."/>
            <person name="Jalali M."/>
            <person name="Kalush F."/>
            <person name="Karpen G.H."/>
            <person name="Ke Z."/>
            <person name="Kennison J.A."/>
            <person name="Ketchum K.A."/>
            <person name="Kimmel B.E."/>
            <person name="Kodira C.D."/>
            <person name="Kraft C.L."/>
            <person name="Kravitz S."/>
            <person name="Kulp D."/>
            <person name="Lai Z."/>
            <person name="Lasko P."/>
            <person name="Lei Y."/>
            <person name="Levitsky A.A."/>
            <person name="Li J.H."/>
            <person name="Li Z."/>
            <person name="Liang Y."/>
            <person name="Lin X."/>
            <person name="Liu X."/>
            <person name="Mattei B."/>
            <person name="McIntosh T.C."/>
            <person name="McLeod M.P."/>
            <person name="McPherson D."/>
            <person name="Merkulov G."/>
            <person name="Milshina N.V."/>
            <person name="Mobarry C."/>
            <person name="Morris J."/>
            <person name="Moshrefi A."/>
            <person name="Mount S.M."/>
            <person name="Moy M."/>
            <person name="Murphy B."/>
            <person name="Murphy L."/>
            <person name="Muzny D.M."/>
            <person name="Nelson D.L."/>
            <person name="Nelson D.R."/>
            <person name="Nelson K.A."/>
            <person name="Nixon K."/>
            <person name="Nusskern D.R."/>
            <person name="Pacleb J.M."/>
            <person name="Palazzolo M."/>
            <person name="Pittman G.S."/>
            <person name="Pan S."/>
            <person name="Pollard J."/>
            <person name="Puri V."/>
            <person name="Reese M.G."/>
            <person name="Reinert K."/>
            <person name="Remington K."/>
            <person name="Saunders R.D.C."/>
            <person name="Scheeler F."/>
            <person name="Shen H."/>
            <person name="Shue B.C."/>
            <person name="Siden-Kiamos I."/>
            <person name="Simpson M."/>
            <person name="Skupski M.P."/>
            <person name="Smith T.J."/>
            <person name="Spier E."/>
            <person name="Spradling A.C."/>
            <person name="Stapleton M."/>
            <person name="Strong R."/>
            <person name="Sun E."/>
            <person name="Svirskas R."/>
            <person name="Tector C."/>
            <person name="Turner R."/>
            <person name="Venter E."/>
            <person name="Wang A.H."/>
            <person name="Wang X."/>
            <person name="Wang Z.-Y."/>
            <person name="Wassarman D.A."/>
            <person name="Weinstock G.M."/>
            <person name="Weissenbach J."/>
            <person name="Williams S.M."/>
            <person name="Woodage T."/>
            <person name="Worley K.C."/>
            <person name="Wu D."/>
            <person name="Yang S."/>
            <person name="Yao Q.A."/>
            <person name="Ye J."/>
            <person name="Yeh R.-F."/>
            <person name="Zaveri J.S."/>
            <person name="Zhan M."/>
            <person name="Zhang G."/>
            <person name="Zhao Q."/>
            <person name="Zheng L."/>
            <person name="Zheng X.H."/>
            <person name="Zhong F.N."/>
            <person name="Zhong W."/>
            <person name="Zhou X."/>
            <person name="Zhu S.C."/>
            <person name="Zhu X."/>
            <person name="Smith H.O."/>
            <person name="Gibbs R.A."/>
            <person name="Myers E.W."/>
            <person name="Rubin G.M."/>
            <person name="Venter J.C."/>
        </authorList>
    </citation>
    <scope>NUCLEOTIDE SEQUENCE [LARGE SCALE GENOMIC DNA]</scope>
    <source>
        <strain evidence="11">Berkeley</strain>
    </source>
</reference>
<reference evidence="11" key="2">
    <citation type="journal article" date="2002" name="Genome Biol.">
        <title>Annotation of the Drosophila melanogaster euchromatic genome: a systematic review.</title>
        <authorList>
            <person name="Misra S."/>
            <person name="Crosby M.A."/>
            <person name="Mungall C.J."/>
            <person name="Matthews B.B."/>
            <person name="Campbell K.S."/>
            <person name="Hradecky P."/>
            <person name="Huang Y."/>
            <person name="Kaminker J.S."/>
            <person name="Millburn G.H."/>
            <person name="Prochnik S.E."/>
            <person name="Smith C.D."/>
            <person name="Tupy J.L."/>
            <person name="Whitfield E.J."/>
            <person name="Bayraktaroglu L."/>
            <person name="Berman B.P."/>
            <person name="Bettencourt B.R."/>
            <person name="Celniker S.E."/>
            <person name="de Grey A.D.N.J."/>
            <person name="Drysdale R.A."/>
            <person name="Harris N.L."/>
            <person name="Richter J."/>
            <person name="Russo S."/>
            <person name="Schroeder A.J."/>
            <person name="Shu S.Q."/>
            <person name="Stapleton M."/>
            <person name="Yamada C."/>
            <person name="Ashburner M."/>
            <person name="Gelbart W.M."/>
            <person name="Rubin G.M."/>
            <person name="Lewis S.E."/>
        </authorList>
    </citation>
    <scope>GENOME REANNOTATION</scope>
    <source>
        <strain evidence="11">Berkeley</strain>
    </source>
</reference>
<reference evidence="9" key="3">
    <citation type="journal article" date="2002" name="Genome Biol.">
        <title>A Drosophila full-length cDNA resource.</title>
        <authorList>
            <person name="Stapleton M."/>
            <person name="Carlson J.W."/>
            <person name="Brokstein P."/>
            <person name="Yu C."/>
            <person name="Champe M."/>
            <person name="George R.A."/>
            <person name="Guarin H."/>
            <person name="Kronmiller B."/>
            <person name="Pacleb J.M."/>
            <person name="Park S."/>
            <person name="Wan K.H."/>
            <person name="Rubin G.M."/>
            <person name="Celniker S.E."/>
        </authorList>
    </citation>
    <scope>NUCLEOTIDE SEQUENCE [LARGE SCALE MRNA]</scope>
    <source>
        <strain evidence="9">Berkeley</strain>
        <tissue evidence="9">Testis</tissue>
    </source>
</reference>
<reference evidence="8" key="4">
    <citation type="journal article" date="2007" name="Science">
        <title>Genes required for mitotic spindle assembly in Drosophila S2 cells.</title>
        <authorList>
            <person name="Goshima G."/>
            <person name="Wollman R."/>
            <person name="Goodwin S.S."/>
            <person name="Zhang N."/>
            <person name="Scholey J.M."/>
            <person name="Vale R.D."/>
            <person name="Stuurman N."/>
        </authorList>
    </citation>
    <scope>FUNCTION</scope>
    <scope>SUBCELLULAR LOCATION</scope>
</reference>
<reference evidence="8" key="5">
    <citation type="journal article" date="2008" name="J. Cell Biol.">
        <title>Augmin: a protein complex required for centrosome-independent microtubule generation within the spindle.</title>
        <authorList>
            <person name="Goshima G."/>
            <person name="Mayer M."/>
            <person name="Zhang N."/>
            <person name="Stuurman N."/>
            <person name="Vale R.D."/>
        </authorList>
    </citation>
    <scope>FUNCTION</scope>
    <scope>IDENTIFICATION IN THE AUGMIN COMPLEX</scope>
</reference>
<reference evidence="8" key="6">
    <citation type="journal article" date="2009" name="J. Cell Biol.">
        <title>Wac: a new Augmin subunit required for chromosome alignment but not for acentrosomal microtubule assembly in female meiosis.</title>
        <authorList>
            <person name="Meireles A.M."/>
            <person name="Fisher K.H."/>
            <person name="Colombie N."/>
            <person name="Wakefield J.G."/>
            <person name="Ohkura H."/>
        </authorList>
    </citation>
    <scope>FUNCTION</scope>
    <scope>INTERACTION WITH WAC</scope>
    <scope>SUBCELLULAR LOCATION</scope>
    <scope>TISSUE SPECIFICITY</scope>
    <scope>DEVELOPMENTAL STAGE</scope>
</reference>
<reference evidence="8" key="7">
    <citation type="journal article" date="2009" name="Proc. Natl. Acad. Sci. U.S.A.">
        <title>The augmin complex plays a critical role in spindle microtubule generation for mitotic progression and cytokinesis in human cells.</title>
        <authorList>
            <person name="Uehara R."/>
            <person name="Nozawa R.-S."/>
            <person name="Tomioka A."/>
            <person name="Petry S."/>
            <person name="Vale R.D."/>
            <person name="Obuse C."/>
            <person name="Goshima G."/>
        </authorList>
    </citation>
    <scope>IDENTIFICATION IN THE AUGMIN COMPLEX</scope>
    <scope>IDENTIFICATION BY MASS SPECTROMETRY</scope>
</reference>
<reference evidence="8" key="8">
    <citation type="journal article" date="2013" name="PLoS Genet.">
        <title>Meiosis-specific stable binding of augmin to acentrosomal spindle poles promotes biased microtubule assembly in oocytes.</title>
        <authorList>
            <person name="Colombie N."/>
            <person name="Gluszek A.A."/>
            <person name="Meireles A.M."/>
            <person name="Ohkura H."/>
        </authorList>
    </citation>
    <scope>SUBCELLULAR LOCATION</scope>
</reference>
<name>DGT2_DROME</name>
<organism evidence="11">
    <name type="scientific">Drosophila melanogaster</name>
    <name type="common">Fruit fly</name>
    <dbReference type="NCBI Taxonomy" id="7227"/>
    <lineage>
        <taxon>Eukaryota</taxon>
        <taxon>Metazoa</taxon>
        <taxon>Ecdysozoa</taxon>
        <taxon>Arthropoda</taxon>
        <taxon>Hexapoda</taxon>
        <taxon>Insecta</taxon>
        <taxon>Pterygota</taxon>
        <taxon>Neoptera</taxon>
        <taxon>Endopterygota</taxon>
        <taxon>Diptera</taxon>
        <taxon>Brachycera</taxon>
        <taxon>Muscomorpha</taxon>
        <taxon>Ephydroidea</taxon>
        <taxon>Drosophilidae</taxon>
        <taxon>Drosophila</taxon>
        <taxon>Sophophora</taxon>
    </lineage>
</organism>
<gene>
    <name evidence="7 10" type="primary">dgt2</name>
    <name evidence="10" type="ORF">CG16969</name>
</gene>
<keyword id="KW-0131">Cell cycle</keyword>
<keyword id="KW-0132">Cell division</keyword>
<keyword id="KW-0175">Coiled coil</keyword>
<keyword id="KW-0963">Cytoplasm</keyword>
<keyword id="KW-0206">Cytoskeleton</keyword>
<keyword id="KW-0493">Microtubule</keyword>
<keyword id="KW-0498">Mitosis</keyword>
<keyword id="KW-1185">Reference proteome</keyword>
<feature type="chain" id="PRO_0000438651" description="Augmin complex subunit dgt2" evidence="8">
    <location>
        <begin position="1"/>
        <end position="231"/>
    </location>
</feature>
<feature type="coiled-coil region" evidence="1">
    <location>
        <begin position="128"/>
        <end position="199"/>
    </location>
</feature>
<protein>
    <recommendedName>
        <fullName evidence="8">Augmin complex subunit dgt2</fullName>
    </recommendedName>
    <alternativeName>
        <fullName evidence="7">Dim gamma-tubulin 2</fullName>
    </alternativeName>
</protein>
<accession>Q9VKD6</accession>
<evidence type="ECO:0000255" key="1"/>
<evidence type="ECO:0000269" key="2">
    <source>
    </source>
</evidence>
<evidence type="ECO:0000269" key="3">
    <source>
    </source>
</evidence>
<evidence type="ECO:0000269" key="4">
    <source>
    </source>
</evidence>
<evidence type="ECO:0000269" key="5">
    <source>
    </source>
</evidence>
<evidence type="ECO:0000269" key="6">
    <source>
    </source>
</evidence>
<evidence type="ECO:0000303" key="7">
    <source>
    </source>
</evidence>
<evidence type="ECO:0000305" key="8"/>
<evidence type="ECO:0000312" key="9">
    <source>
        <dbReference type="EMBL" id="AAL48407.1"/>
    </source>
</evidence>
<evidence type="ECO:0000312" key="10">
    <source>
        <dbReference type="FlyBase" id="FBgn0032390"/>
    </source>
</evidence>
<evidence type="ECO:0000312" key="11">
    <source>
        <dbReference type="Proteomes" id="UP000000803"/>
    </source>
</evidence>
<proteinExistence type="evidence at protein level"/>
<sequence>MDDPSATLLPEHSEDLRLARDAELKKVLKLKLVLDELRRLDVGPNPSDEIKRALKLVSIGSYARLGEMEGAGQEQVLGLPSGSSFPPLNYTDRKTVRTKLSAQLRTTLQPIAELCDRIREEFPDAFGQEADLSCDQKEILRLEEEHRSGLEKLVALLTRKCTLLKETAELKLGPQLANELKLQQAQAQLVQTKAELLRGFFVHEAASRTEHSVKAHKEVEAHLDELLAAKK</sequence>
<comment type="function">
    <text evidence="2 3 4">As part of the augmin complex, plays a role in centrosome-independent generation of spindle microtubules (PubMed:18443220). The complex is required for mitotic spindle assembly through its involvement in localizing gamma-tubulin to spindle microtubules (PubMed:17412918). dgt2 binds to microtubules in vitro (PubMed:19289792).</text>
</comment>
<comment type="subunit">
    <text evidence="3 4 5">Component of the augmin complex composed of dgt2, dgt3, dgt4, dgt5, dgt6, msd1, msd5 and wac (PubMed:18443220, PubMed:19289792). The complex interacts directly or indirectly with microtubules and is required for centrosome-independent generation of spindle microtubules (PubMed:18443220). dgt2 interacts directly with wac (via coiled coil) (PubMed:19289792).</text>
</comment>
<comment type="interaction">
    <interactant intactId="EBI-84322">
        <id>Q9VKD6</id>
    </interactant>
    <interactant intactId="EBI-180262">
        <id>Q9W0S8</id>
        <label>wac</label>
    </interactant>
    <organismsDiffer>false</organismsDiffer>
    <experiments>4</experiments>
</comment>
<comment type="subcellular location">
    <subcellularLocation>
        <location evidence="2 4">Cytoplasm</location>
        <location evidence="2 4">Cytoskeleton</location>
        <location evidence="2 4">Spindle</location>
    </subcellularLocation>
    <subcellularLocation>
        <location evidence="4 6">Cytoplasm</location>
        <location evidence="4 6">Cytoskeleton</location>
        <location evidence="4 6">Spindle pole</location>
    </subcellularLocation>
    <text evidence="4 6">Stably associates with the polar regions of some acentrosomal meiotic spindles in contrast to the uniform staining observed over mitotic spindles in syncytial embryos (PubMed:19289792, PubMed:23785300).</text>
</comment>
<comment type="tissue specificity">
    <text evidence="4">In adult females, detected only in the abdomen with no expression in the head or thorax (at protein level).</text>
</comment>
<comment type="developmental stage">
    <text evidence="4">Expressed at high levels in early embryos but at low levels in larva, pupa and adult (at protein level).</text>
</comment>
<comment type="miscellaneous">
    <text evidence="7">The name 'dim gamma-tubulin 2' derives from the decreased gamma-tubulin staining of the spindle pole seen following RNAi-mediated knockdown of dgt2 in S2 cells.</text>
</comment>
<dbReference type="EMBL" id="AE014134">
    <property type="protein sequence ID" value="AAF53140.1"/>
    <property type="molecule type" value="Genomic_DNA"/>
</dbReference>
<dbReference type="EMBL" id="AE014134">
    <property type="protein sequence ID" value="AHN54370.1"/>
    <property type="molecule type" value="Genomic_DNA"/>
</dbReference>
<dbReference type="EMBL" id="AY070785">
    <property type="protein sequence ID" value="AAL48407.1"/>
    <property type="molecule type" value="mRNA"/>
</dbReference>
<dbReference type="RefSeq" id="NP_001285856.1">
    <property type="nucleotide sequence ID" value="NM_001298927.1"/>
</dbReference>
<dbReference type="RefSeq" id="NP_609531.1">
    <property type="nucleotide sequence ID" value="NM_135687.5"/>
</dbReference>
<dbReference type="SMR" id="Q9VKD6"/>
<dbReference type="ComplexPortal" id="CPX-9861">
    <property type="entry name" value="Augmin complex"/>
</dbReference>
<dbReference type="FunCoup" id="Q9VKD6">
    <property type="interactions" value="16"/>
</dbReference>
<dbReference type="IntAct" id="Q9VKD6">
    <property type="interactions" value="14"/>
</dbReference>
<dbReference type="STRING" id="7227.FBpp0309535"/>
<dbReference type="PaxDb" id="7227-FBpp0079869"/>
<dbReference type="DNASU" id="34610"/>
<dbReference type="EnsemblMetazoa" id="FBtr0080285">
    <property type="protein sequence ID" value="FBpp0079869"/>
    <property type="gene ID" value="FBgn0032390"/>
</dbReference>
<dbReference type="EnsemblMetazoa" id="FBtr0342580">
    <property type="protein sequence ID" value="FBpp0309535"/>
    <property type="gene ID" value="FBgn0032390"/>
</dbReference>
<dbReference type="GeneID" id="34610"/>
<dbReference type="KEGG" id="dme:Dmel_CG16969"/>
<dbReference type="UCSC" id="CG16969-RA">
    <property type="organism name" value="d. melanogaster"/>
</dbReference>
<dbReference type="AGR" id="FB:FBgn0032390"/>
<dbReference type="CTD" id="34610"/>
<dbReference type="FlyBase" id="FBgn0032390">
    <property type="gene designation" value="dgt2"/>
</dbReference>
<dbReference type="VEuPathDB" id="VectorBase:FBgn0032390"/>
<dbReference type="eggNOG" id="ENOG502TCA4">
    <property type="taxonomic scope" value="Eukaryota"/>
</dbReference>
<dbReference type="HOGENOM" id="CLU_1200930_0_0_1"/>
<dbReference type="InParanoid" id="Q9VKD6"/>
<dbReference type="OMA" id="YTDRKAV"/>
<dbReference type="OrthoDB" id="7757854at2759"/>
<dbReference type="PhylomeDB" id="Q9VKD6"/>
<dbReference type="BioGRID-ORCS" id="34610">
    <property type="hits" value="1 hit in 1 CRISPR screen"/>
</dbReference>
<dbReference type="GenomeRNAi" id="34610"/>
<dbReference type="PRO" id="PR:Q9VKD6"/>
<dbReference type="Proteomes" id="UP000000803">
    <property type="component" value="Chromosome 2L"/>
</dbReference>
<dbReference type="Bgee" id="FBgn0032390">
    <property type="expression patterns" value="Expressed in spermatogonium in testis and 49 other cell types or tissues"/>
</dbReference>
<dbReference type="GO" id="GO:0005737">
    <property type="term" value="C:cytoplasm"/>
    <property type="evidence" value="ECO:0007669"/>
    <property type="project" value="UniProtKB-KW"/>
</dbReference>
<dbReference type="GO" id="GO:0070652">
    <property type="term" value="C:HAUS complex"/>
    <property type="evidence" value="ECO:0000314"/>
    <property type="project" value="FlyBase"/>
</dbReference>
<dbReference type="GO" id="GO:0072687">
    <property type="term" value="C:meiotic spindle"/>
    <property type="evidence" value="ECO:0000314"/>
    <property type="project" value="FlyBase"/>
</dbReference>
<dbReference type="GO" id="GO:0005874">
    <property type="term" value="C:microtubule"/>
    <property type="evidence" value="ECO:0007669"/>
    <property type="project" value="UniProtKB-KW"/>
</dbReference>
<dbReference type="GO" id="GO:0032991">
    <property type="term" value="C:protein-containing complex"/>
    <property type="evidence" value="ECO:0000314"/>
    <property type="project" value="FlyBase"/>
</dbReference>
<dbReference type="GO" id="GO:0005819">
    <property type="term" value="C:spindle"/>
    <property type="evidence" value="ECO:0000314"/>
    <property type="project" value="FlyBase"/>
</dbReference>
<dbReference type="GO" id="GO:0000922">
    <property type="term" value="C:spindle pole"/>
    <property type="evidence" value="ECO:0007669"/>
    <property type="project" value="UniProtKB-SubCell"/>
</dbReference>
<dbReference type="GO" id="GO:0008017">
    <property type="term" value="F:microtubule binding"/>
    <property type="evidence" value="ECO:0000314"/>
    <property type="project" value="FlyBase"/>
</dbReference>
<dbReference type="GO" id="GO:0051301">
    <property type="term" value="P:cell division"/>
    <property type="evidence" value="ECO:0007669"/>
    <property type="project" value="UniProtKB-KW"/>
</dbReference>
<dbReference type="GO" id="GO:0090307">
    <property type="term" value="P:mitotic spindle assembly"/>
    <property type="evidence" value="ECO:0000305"/>
    <property type="project" value="FlyBase"/>
</dbReference>
<dbReference type="GO" id="GO:0090221">
    <property type="term" value="P:mitotic spindle-templated microtubule nucleation"/>
    <property type="evidence" value="ECO:0000314"/>
    <property type="project" value="FlyBase"/>
</dbReference>